<evidence type="ECO:0000255" key="1">
    <source>
        <dbReference type="HAMAP-Rule" id="MF_00454"/>
    </source>
</evidence>
<dbReference type="EMBL" id="AE015451">
    <property type="protein sequence ID" value="AAN69595.1"/>
    <property type="molecule type" value="Genomic_DNA"/>
</dbReference>
<dbReference type="RefSeq" id="NP_746131.1">
    <property type="nucleotide sequence ID" value="NC_002947.4"/>
</dbReference>
<dbReference type="RefSeq" id="WP_003251205.1">
    <property type="nucleotide sequence ID" value="NZ_CP169744.1"/>
</dbReference>
<dbReference type="SMR" id="Q88FT1"/>
<dbReference type="STRING" id="160488.PP_4001"/>
<dbReference type="PaxDb" id="160488-PP_4001"/>
<dbReference type="GeneID" id="83679296"/>
<dbReference type="KEGG" id="ppu:PP_4001"/>
<dbReference type="PATRIC" id="fig|160488.4.peg.4257"/>
<dbReference type="eggNOG" id="COG0239">
    <property type="taxonomic scope" value="Bacteria"/>
</dbReference>
<dbReference type="HOGENOM" id="CLU_114342_2_3_6"/>
<dbReference type="OrthoDB" id="9806299at2"/>
<dbReference type="PhylomeDB" id="Q88FT1"/>
<dbReference type="BioCyc" id="PPUT160488:G1G01-4268-MONOMER"/>
<dbReference type="Proteomes" id="UP000000556">
    <property type="component" value="Chromosome"/>
</dbReference>
<dbReference type="GO" id="GO:0005886">
    <property type="term" value="C:plasma membrane"/>
    <property type="evidence" value="ECO:0007669"/>
    <property type="project" value="UniProtKB-SubCell"/>
</dbReference>
<dbReference type="GO" id="GO:0062054">
    <property type="term" value="F:fluoride channel activity"/>
    <property type="evidence" value="ECO:0007669"/>
    <property type="project" value="UniProtKB-UniRule"/>
</dbReference>
<dbReference type="GO" id="GO:0046872">
    <property type="term" value="F:metal ion binding"/>
    <property type="evidence" value="ECO:0007669"/>
    <property type="project" value="UniProtKB-KW"/>
</dbReference>
<dbReference type="GO" id="GO:0140114">
    <property type="term" value="P:cellular detoxification of fluoride"/>
    <property type="evidence" value="ECO:0007669"/>
    <property type="project" value="UniProtKB-UniRule"/>
</dbReference>
<dbReference type="HAMAP" id="MF_00454">
    <property type="entry name" value="FluC"/>
    <property type="match status" value="1"/>
</dbReference>
<dbReference type="InterPro" id="IPR003691">
    <property type="entry name" value="FluC"/>
</dbReference>
<dbReference type="NCBIfam" id="TIGR00494">
    <property type="entry name" value="crcB"/>
    <property type="match status" value="1"/>
</dbReference>
<dbReference type="NCBIfam" id="NF010830">
    <property type="entry name" value="PRK14234.1"/>
    <property type="match status" value="1"/>
</dbReference>
<dbReference type="PANTHER" id="PTHR28259">
    <property type="entry name" value="FLUORIDE EXPORT PROTEIN 1-RELATED"/>
    <property type="match status" value="1"/>
</dbReference>
<dbReference type="PANTHER" id="PTHR28259:SF1">
    <property type="entry name" value="FLUORIDE EXPORT PROTEIN 1-RELATED"/>
    <property type="match status" value="1"/>
</dbReference>
<dbReference type="Pfam" id="PF02537">
    <property type="entry name" value="CRCB"/>
    <property type="match status" value="1"/>
</dbReference>
<organism>
    <name type="scientific">Pseudomonas putida (strain ATCC 47054 / DSM 6125 / CFBP 8728 / NCIMB 11950 / KT2440)</name>
    <dbReference type="NCBI Taxonomy" id="160488"/>
    <lineage>
        <taxon>Bacteria</taxon>
        <taxon>Pseudomonadati</taxon>
        <taxon>Pseudomonadota</taxon>
        <taxon>Gammaproteobacteria</taxon>
        <taxon>Pseudomonadales</taxon>
        <taxon>Pseudomonadaceae</taxon>
        <taxon>Pseudomonas</taxon>
    </lineage>
</organism>
<feature type="chain" id="PRO_0000110158" description="Fluoride-specific ion channel FluC">
    <location>
        <begin position="1"/>
        <end position="124"/>
    </location>
</feature>
<feature type="transmembrane region" description="Helical" evidence="1">
    <location>
        <begin position="1"/>
        <end position="21"/>
    </location>
</feature>
<feature type="transmembrane region" description="Helical" evidence="1">
    <location>
        <begin position="37"/>
        <end position="57"/>
    </location>
</feature>
<feature type="transmembrane region" description="Helical" evidence="1">
    <location>
        <begin position="69"/>
        <end position="89"/>
    </location>
</feature>
<feature type="transmembrane region" description="Helical" evidence="1">
    <location>
        <begin position="99"/>
        <end position="119"/>
    </location>
</feature>
<feature type="binding site" evidence="1">
    <location>
        <position position="76"/>
    </location>
    <ligand>
        <name>Na(+)</name>
        <dbReference type="ChEBI" id="CHEBI:29101"/>
        <note>structural</note>
    </ligand>
</feature>
<feature type="binding site" evidence="1">
    <location>
        <position position="79"/>
    </location>
    <ligand>
        <name>Na(+)</name>
        <dbReference type="ChEBI" id="CHEBI:29101"/>
        <note>structural</note>
    </ligand>
</feature>
<name>FLUC_PSEPK</name>
<gene>
    <name evidence="1" type="primary">fluC</name>
    <name evidence="1" type="synonym">crcB</name>
    <name type="ordered locus">PP_4001</name>
</gene>
<keyword id="KW-0997">Cell inner membrane</keyword>
<keyword id="KW-1003">Cell membrane</keyword>
<keyword id="KW-0407">Ion channel</keyword>
<keyword id="KW-0406">Ion transport</keyword>
<keyword id="KW-0472">Membrane</keyword>
<keyword id="KW-0479">Metal-binding</keyword>
<keyword id="KW-1185">Reference proteome</keyword>
<keyword id="KW-0915">Sodium</keyword>
<keyword id="KW-0812">Transmembrane</keyword>
<keyword id="KW-1133">Transmembrane helix</keyword>
<keyword id="KW-0813">Transport</keyword>
<proteinExistence type="inferred from homology"/>
<reference key="1">
    <citation type="journal article" date="2002" name="Environ. Microbiol.">
        <title>Complete genome sequence and comparative analysis of the metabolically versatile Pseudomonas putida KT2440.</title>
        <authorList>
            <person name="Nelson K.E."/>
            <person name="Weinel C."/>
            <person name="Paulsen I.T."/>
            <person name="Dodson R.J."/>
            <person name="Hilbert H."/>
            <person name="Martins dos Santos V.A.P."/>
            <person name="Fouts D.E."/>
            <person name="Gill S.R."/>
            <person name="Pop M."/>
            <person name="Holmes M."/>
            <person name="Brinkac L.M."/>
            <person name="Beanan M.J."/>
            <person name="DeBoy R.T."/>
            <person name="Daugherty S.C."/>
            <person name="Kolonay J.F."/>
            <person name="Madupu R."/>
            <person name="Nelson W.C."/>
            <person name="White O."/>
            <person name="Peterson J.D."/>
            <person name="Khouri H.M."/>
            <person name="Hance I."/>
            <person name="Chris Lee P."/>
            <person name="Holtzapple E.K."/>
            <person name="Scanlan D."/>
            <person name="Tran K."/>
            <person name="Moazzez A."/>
            <person name="Utterback T.R."/>
            <person name="Rizzo M."/>
            <person name="Lee K."/>
            <person name="Kosack D."/>
            <person name="Moestl D."/>
            <person name="Wedler H."/>
            <person name="Lauber J."/>
            <person name="Stjepandic D."/>
            <person name="Hoheisel J."/>
            <person name="Straetz M."/>
            <person name="Heim S."/>
            <person name="Kiewitz C."/>
            <person name="Eisen J.A."/>
            <person name="Timmis K.N."/>
            <person name="Duesterhoeft A."/>
            <person name="Tuemmler B."/>
            <person name="Fraser C.M."/>
        </authorList>
    </citation>
    <scope>NUCLEOTIDE SEQUENCE [LARGE SCALE GENOMIC DNA]</scope>
    <source>
        <strain>ATCC 47054 / DSM 6125 / CFBP 8728 / NCIMB 11950 / KT2440</strain>
    </source>
</reference>
<comment type="function">
    <text evidence="1">Fluoride-specific ion channel. Important for reducing fluoride concentration in the cell, thus reducing its toxicity.</text>
</comment>
<comment type="catalytic activity">
    <reaction evidence="1">
        <text>fluoride(in) = fluoride(out)</text>
        <dbReference type="Rhea" id="RHEA:76159"/>
        <dbReference type="ChEBI" id="CHEBI:17051"/>
    </reaction>
    <physiologicalReaction direction="left-to-right" evidence="1">
        <dbReference type="Rhea" id="RHEA:76160"/>
    </physiologicalReaction>
</comment>
<comment type="activity regulation">
    <text evidence="1">Na(+) is not transported, but it plays an essential structural role and its presence is essential for fluoride channel function.</text>
</comment>
<comment type="subcellular location">
    <subcellularLocation>
        <location evidence="1">Cell inner membrane</location>
        <topology evidence="1">Multi-pass membrane protein</topology>
    </subcellularLocation>
</comment>
<comment type="similarity">
    <text evidence="1">Belongs to the fluoride channel Fluc/FEX (TC 1.A.43) family.</text>
</comment>
<protein>
    <recommendedName>
        <fullName evidence="1">Fluoride-specific ion channel FluC</fullName>
    </recommendedName>
</protein>
<sequence>MIALIAAVSAGGIAGTLLRFATTNWVAAHWPRHFYAGTLAVNLVGCLLIGLLYGLFLHKPLAPVELRAGLIVGFLGGLTTFSSFSLDTVRLMESGQVPLALGYTSISVVGGLLATWAGLSLTRF</sequence>
<accession>Q88FT1</accession>